<protein>
    <recommendedName>
        <fullName>Lysosomal thioesterase PPT2</fullName>
        <shortName>PPT-2</shortName>
        <ecNumber evidence="1">3.1.2.2</ecNumber>
    </recommendedName>
</protein>
<dbReference type="EC" id="3.1.2.2" evidence="1"/>
<dbReference type="EMBL" id="AF030001">
    <property type="protein sequence ID" value="AAB82011.1"/>
    <property type="molecule type" value="Genomic_DNA"/>
</dbReference>
<dbReference type="EMBL" id="BC013462">
    <property type="protein sequence ID" value="AAH13462.1"/>
    <property type="molecule type" value="mRNA"/>
</dbReference>
<dbReference type="EMBL" id="BC052330">
    <property type="protein sequence ID" value="AAH52330.1"/>
    <property type="molecule type" value="mRNA"/>
</dbReference>
<dbReference type="CCDS" id="CCDS28652.1"/>
<dbReference type="PIR" id="T09066">
    <property type="entry name" value="T09066"/>
</dbReference>
<dbReference type="RefSeq" id="NP_001289322.1">
    <property type="nucleotide sequence ID" value="NM_001302393.1"/>
</dbReference>
<dbReference type="RefSeq" id="NP_001289323.1">
    <property type="nucleotide sequence ID" value="NM_001302394.1"/>
</dbReference>
<dbReference type="RefSeq" id="NP_001289324.1">
    <property type="nucleotide sequence ID" value="NM_001302395.1"/>
</dbReference>
<dbReference type="RefSeq" id="NP_001289325.1">
    <property type="nucleotide sequence ID" value="NM_001302396.1"/>
</dbReference>
<dbReference type="RefSeq" id="NP_062314.1">
    <property type="nucleotide sequence ID" value="NM_019441.5"/>
</dbReference>
<dbReference type="RefSeq" id="XP_006524701.1">
    <property type="nucleotide sequence ID" value="XM_006524638.4"/>
</dbReference>
<dbReference type="SMR" id="O35448"/>
<dbReference type="BioGRID" id="207646">
    <property type="interactions" value="1"/>
</dbReference>
<dbReference type="FunCoup" id="O35448">
    <property type="interactions" value="2259"/>
</dbReference>
<dbReference type="STRING" id="10090.ENSMUSP00000131243"/>
<dbReference type="ChEMBL" id="CHEMBL3259496"/>
<dbReference type="ESTHER" id="mouse-PPT2">
    <property type="family name" value="Palmitoyl-protein_thioesterase"/>
</dbReference>
<dbReference type="GlyConnect" id="2493">
    <property type="glycosylation" value="6 N-Linked glycans (2 sites)"/>
</dbReference>
<dbReference type="GlyCosmos" id="O35448">
    <property type="glycosylation" value="5 sites, 6 glycans"/>
</dbReference>
<dbReference type="GlyGen" id="O35448">
    <property type="glycosylation" value="6 sites, 8 N-linked glycans (2 sites), 1 O-linked glycan (1 site)"/>
</dbReference>
<dbReference type="iPTMnet" id="O35448"/>
<dbReference type="PhosphoSitePlus" id="O35448"/>
<dbReference type="PaxDb" id="10090-ENSMUSP00000131243"/>
<dbReference type="PeptideAtlas" id="O35448"/>
<dbReference type="ProteomicsDB" id="289817"/>
<dbReference type="Pumba" id="O35448"/>
<dbReference type="Ensembl" id="ENSMUST00000064953.15">
    <property type="protein sequence ID" value="ENSMUSP00000068071.9"/>
    <property type="gene ID" value="ENSMUSG00000015474.17"/>
</dbReference>
<dbReference type="Ensembl" id="ENSMUST00000166040.9">
    <property type="protein sequence ID" value="ENSMUSP00000132006.3"/>
    <property type="gene ID" value="ENSMUSG00000015474.17"/>
</dbReference>
<dbReference type="Ensembl" id="ENSMUST00000168391.9">
    <property type="protein sequence ID" value="ENSMUSP00000132339.3"/>
    <property type="gene ID" value="ENSMUSG00000015474.17"/>
</dbReference>
<dbReference type="Ensembl" id="ENSMUST00000169067.9">
    <property type="protein sequence ID" value="ENSMUSP00000127372.3"/>
    <property type="gene ID" value="ENSMUSG00000015474.17"/>
</dbReference>
<dbReference type="Ensembl" id="ENSMUST00000171121.9">
    <property type="protein sequence ID" value="ENSMUSP00000127745.3"/>
    <property type="gene ID" value="ENSMUSG00000015474.17"/>
</dbReference>
<dbReference type="Ensembl" id="ENSMUST00000171376.8">
    <property type="protein sequence ID" value="ENSMUSP00000131243.2"/>
    <property type="gene ID" value="ENSMUSG00000015474.17"/>
</dbReference>
<dbReference type="GeneID" id="54397"/>
<dbReference type="KEGG" id="mmu:54397"/>
<dbReference type="UCSC" id="uc008cdd.2">
    <property type="organism name" value="mouse"/>
</dbReference>
<dbReference type="AGR" id="MGI:1860075"/>
<dbReference type="CTD" id="9374"/>
<dbReference type="MGI" id="MGI:1860075">
    <property type="gene designation" value="Ppt2"/>
</dbReference>
<dbReference type="VEuPathDB" id="HostDB:ENSMUSG00000015474"/>
<dbReference type="eggNOG" id="KOG2541">
    <property type="taxonomic scope" value="Eukaryota"/>
</dbReference>
<dbReference type="GeneTree" id="ENSGT00940000155779"/>
<dbReference type="InParanoid" id="O35448"/>
<dbReference type="OMA" id="HHSDLYL"/>
<dbReference type="OrthoDB" id="155976at2759"/>
<dbReference type="PhylomeDB" id="O35448"/>
<dbReference type="TreeFam" id="TF323926"/>
<dbReference type="Reactome" id="R-MMU-75105">
    <property type="pathway name" value="Fatty acyl-CoA biosynthesis"/>
</dbReference>
<dbReference type="BioGRID-ORCS" id="54397">
    <property type="hits" value="4 hits in 81 CRISPR screens"/>
</dbReference>
<dbReference type="ChiTaRS" id="Ppt2">
    <property type="organism name" value="mouse"/>
</dbReference>
<dbReference type="PRO" id="PR:O35448"/>
<dbReference type="Proteomes" id="UP000000589">
    <property type="component" value="Chromosome 17"/>
</dbReference>
<dbReference type="RNAct" id="O35448">
    <property type="molecule type" value="protein"/>
</dbReference>
<dbReference type="Bgee" id="ENSMUSG00000015474">
    <property type="expression patterns" value="Expressed in otic placode and 248 other cell types or tissues"/>
</dbReference>
<dbReference type="ExpressionAtlas" id="O35448">
    <property type="expression patterns" value="baseline and differential"/>
</dbReference>
<dbReference type="GO" id="GO:0005764">
    <property type="term" value="C:lysosome"/>
    <property type="evidence" value="ECO:0007669"/>
    <property type="project" value="UniProtKB-SubCell"/>
</dbReference>
<dbReference type="GO" id="GO:0047617">
    <property type="term" value="F:fatty acyl-CoA hydrolase activity"/>
    <property type="evidence" value="ECO:0000250"/>
    <property type="project" value="UniProtKB"/>
</dbReference>
<dbReference type="GO" id="GO:0098599">
    <property type="term" value="F:palmitoyl hydrolase activity"/>
    <property type="evidence" value="ECO:0000250"/>
    <property type="project" value="UniProtKB"/>
</dbReference>
<dbReference type="GO" id="GO:0016790">
    <property type="term" value="F:thiolester hydrolase activity"/>
    <property type="evidence" value="ECO:0000250"/>
    <property type="project" value="UniProtKB"/>
</dbReference>
<dbReference type="FunFam" id="3.40.50.1820:FF:000037">
    <property type="entry name" value="Lysosomal thioesterase PPT2 homolog"/>
    <property type="match status" value="1"/>
</dbReference>
<dbReference type="Gene3D" id="3.40.50.1820">
    <property type="entry name" value="alpha/beta hydrolase"/>
    <property type="match status" value="1"/>
</dbReference>
<dbReference type="InterPro" id="IPR029058">
    <property type="entry name" value="AB_hydrolase_fold"/>
</dbReference>
<dbReference type="InterPro" id="IPR002472">
    <property type="entry name" value="Palm_thioest"/>
</dbReference>
<dbReference type="PANTHER" id="PTHR11247:SF27">
    <property type="entry name" value="LYSOSOMAL THIOESTERASE PPT2"/>
    <property type="match status" value="1"/>
</dbReference>
<dbReference type="PANTHER" id="PTHR11247">
    <property type="entry name" value="PALMITOYL-PROTEIN THIOESTERASE/DOLICHYLDIPHOSPHATASE 1"/>
    <property type="match status" value="1"/>
</dbReference>
<dbReference type="Pfam" id="PF02089">
    <property type="entry name" value="Palm_thioest"/>
    <property type="match status" value="1"/>
</dbReference>
<dbReference type="PRINTS" id="PR00414">
    <property type="entry name" value="PPTHIESTRASE"/>
</dbReference>
<dbReference type="SUPFAM" id="SSF53474">
    <property type="entry name" value="alpha/beta-Hydrolases"/>
    <property type="match status" value="1"/>
</dbReference>
<accession>O35448</accession>
<accession>Q80WP5</accession>
<comment type="function">
    <text evidence="1">Catalyzes the cleavage of thioester bonds from S-palmitoyl-CoA or S-palmitoyl-N-acetylcysteamine (unbranched structures) but does not have activity against palmitoylcysteine or palmitoylated proteins, branched structures or bulky head groups. Conversely, hydrolyzes both long and short chain fatty acyl-CoA substrate.</text>
</comment>
<comment type="catalytic activity">
    <reaction evidence="1">
        <text>hexadecanoyl-CoA + H2O = hexadecanoate + CoA + H(+)</text>
        <dbReference type="Rhea" id="RHEA:16645"/>
        <dbReference type="ChEBI" id="CHEBI:7896"/>
        <dbReference type="ChEBI" id="CHEBI:15377"/>
        <dbReference type="ChEBI" id="CHEBI:15378"/>
        <dbReference type="ChEBI" id="CHEBI:57287"/>
        <dbReference type="ChEBI" id="CHEBI:57379"/>
        <dbReference type="EC" id="3.1.2.2"/>
    </reaction>
</comment>
<comment type="catalytic activity">
    <reaction evidence="1">
        <text>S-hexadecanoyl-N-acetylcysteamine + H2O = N-acetylcysteamine + hexadecanoate + H(+)</text>
        <dbReference type="Rhea" id="RHEA:84099"/>
        <dbReference type="ChEBI" id="CHEBI:7896"/>
        <dbReference type="ChEBI" id="CHEBI:15377"/>
        <dbReference type="ChEBI" id="CHEBI:15378"/>
        <dbReference type="ChEBI" id="CHEBI:74410"/>
        <dbReference type="ChEBI" id="CHEBI:233601"/>
    </reaction>
</comment>
<comment type="subcellular location">
    <subcellularLocation>
        <location evidence="4">Lysosome</location>
    </subcellularLocation>
</comment>
<comment type="tissue specificity">
    <text evidence="3 4">Expressed throughout the brain, primarily in neurons, and at lower levels in glial cells.</text>
</comment>
<comment type="disruption phenotype">
    <text evidence="3 4">Mice are healthy at birth, but develop neuronal abnormalities, infiltration of bone marrow by macrophages and multinucleated giant cells, and splenomegaly caused by extramedullary hematopoiesis. Autofluorescent storage material is present in many cell types, particularly reticuloendothelial cells and neurons.</text>
</comment>
<comment type="similarity">
    <text evidence="5">Belongs to the palmitoyl-protein thioesterase family.</text>
</comment>
<proteinExistence type="evidence at protein level"/>
<name>PPT2_MOUSE</name>
<sequence length="302" mass="34366">MPGLWRQRLPSAWALLLLPFLPLLMPAAPAAHRGSYKPVIVVHGLFDSSYSFRHLLDYINETHTGTVVTVLDLFDGRESLRPLWEQVQGFREAVVPIMEKAPEGVHLICYSQGGLVCRALLSVMDNHNVDSFISLSSPQMGQYGDTDYLKWLFPTSMRSNLYRVCYSPWGQEFSICNYWHDPHHDDLYLNASSFLALINGERDHPNATAWRKNFLRVGRLVLIGGPDDGVITPWQSSFFGFYDANETVLEMEEQPVYLRDSFGLKTLLARGAIVRCPMAGISHTTWHSNRTLYDTCIEPWLS</sequence>
<reference key="1">
    <citation type="journal article" date="2003" name="Genome Res.">
        <title>Analysis of the gene-dense major histocompatibility complex class III region and its comparison to mouse.</title>
        <authorList>
            <person name="Xie T."/>
            <person name="Rowen L."/>
            <person name="Aguado B."/>
            <person name="Ahearn M.E."/>
            <person name="Madan A."/>
            <person name="Qin S."/>
            <person name="Campbell R.D."/>
            <person name="Hood L."/>
        </authorList>
    </citation>
    <scope>NUCLEOTIDE SEQUENCE [LARGE SCALE GENOMIC DNA]</scope>
    <source>
        <strain>129</strain>
    </source>
</reference>
<reference key="2">
    <citation type="journal article" date="2004" name="Genome Res.">
        <title>The status, quality, and expansion of the NIH full-length cDNA project: the Mammalian Gene Collection (MGC).</title>
        <authorList>
            <consortium name="The MGC Project Team"/>
        </authorList>
    </citation>
    <scope>NUCLEOTIDE SEQUENCE [LARGE SCALE MRNA]</scope>
    <source>
        <strain>FVB/N</strain>
        <tissue>Colon</tissue>
        <tissue>Kidney</tissue>
    </source>
</reference>
<reference key="3">
    <citation type="journal article" date="2001" name="Proc. Natl. Acad. Sci. U.S.A.">
        <title>Disruption of PPT1 or PPT2 causes neuronal ceroid lipofuscinosis in knockout mice.</title>
        <authorList>
            <person name="Gupta P."/>
            <person name="Soyombo A.A."/>
            <person name="Atashband A."/>
            <person name="Wisniewski K.E."/>
            <person name="Shelton J.M."/>
            <person name="Richardson J.A."/>
            <person name="Hammer R.E."/>
            <person name="Hofmann S.L."/>
        </authorList>
    </citation>
    <scope>TISSUE SPECIFICITY</scope>
    <scope>DISRUPTION PHENOTYPE</scope>
</reference>
<reference key="4">
    <citation type="journal article" date="2003" name="Proc. Natl. Acad. Sci. U.S.A.">
        <title>Disruption of PPT2 in mice causes an unusual lysosomal storage disorder with neurovisceral features.</title>
        <authorList>
            <person name="Gupta P."/>
            <person name="Soyombo A.A."/>
            <person name="Shelton J.M."/>
            <person name="Wilkofsky I.G."/>
            <person name="Wisniewski K.E."/>
            <person name="Richardson J.A."/>
            <person name="Hofmann S.L."/>
        </authorList>
    </citation>
    <scope>TISSUE SPECIFICITY</scope>
    <scope>SUBCELLULAR LOCATION</scope>
    <scope>DISRUPTION PHENOTYPE</scope>
</reference>
<reference key="5">
    <citation type="journal article" date="2010" name="Cell">
        <title>A tissue-specific atlas of mouse protein phosphorylation and expression.</title>
        <authorList>
            <person name="Huttlin E.L."/>
            <person name="Jedrychowski M.P."/>
            <person name="Elias J.E."/>
            <person name="Goswami T."/>
            <person name="Rad R."/>
            <person name="Beausoleil S.A."/>
            <person name="Villen J."/>
            <person name="Haas W."/>
            <person name="Sowa M.E."/>
            <person name="Gygi S.P."/>
        </authorList>
    </citation>
    <scope>IDENTIFICATION BY MASS SPECTROMETRY [LARGE SCALE ANALYSIS]</scope>
    <source>
        <tissue>Kidney</tissue>
        <tissue>Liver</tissue>
        <tissue>Spleen</tissue>
    </source>
</reference>
<evidence type="ECO:0000250" key="1">
    <source>
        <dbReference type="UniProtKB" id="Q9UMR5"/>
    </source>
</evidence>
<evidence type="ECO:0000255" key="2"/>
<evidence type="ECO:0000269" key="3">
    <source>
    </source>
</evidence>
<evidence type="ECO:0000269" key="4">
    <source>
    </source>
</evidence>
<evidence type="ECO:0000305" key="5"/>
<gene>
    <name type="primary">Ppt2</name>
</gene>
<organism>
    <name type="scientific">Mus musculus</name>
    <name type="common">Mouse</name>
    <dbReference type="NCBI Taxonomy" id="10090"/>
    <lineage>
        <taxon>Eukaryota</taxon>
        <taxon>Metazoa</taxon>
        <taxon>Chordata</taxon>
        <taxon>Craniata</taxon>
        <taxon>Vertebrata</taxon>
        <taxon>Euteleostomi</taxon>
        <taxon>Mammalia</taxon>
        <taxon>Eutheria</taxon>
        <taxon>Euarchontoglires</taxon>
        <taxon>Glires</taxon>
        <taxon>Rodentia</taxon>
        <taxon>Myomorpha</taxon>
        <taxon>Muroidea</taxon>
        <taxon>Muridae</taxon>
        <taxon>Murinae</taxon>
        <taxon>Mus</taxon>
        <taxon>Mus</taxon>
    </lineage>
</organism>
<feature type="signal peptide" evidence="2">
    <location>
        <begin position="1"/>
        <end position="27"/>
    </location>
</feature>
<feature type="chain" id="PRO_0000025555" description="Lysosomal thioesterase PPT2">
    <location>
        <begin position="28"/>
        <end position="302"/>
    </location>
</feature>
<feature type="active site" description="Nucleophile" evidence="1">
    <location>
        <position position="111"/>
    </location>
</feature>
<feature type="active site" evidence="1">
    <location>
        <position position="228"/>
    </location>
</feature>
<feature type="active site" evidence="1">
    <location>
        <position position="283"/>
    </location>
</feature>
<feature type="glycosylation site" description="N-linked (GlcNAc...) asparagine" evidence="2">
    <location>
        <position position="60"/>
    </location>
</feature>
<feature type="glycosylation site" description="N-linked (GlcNAc...) asparagine" evidence="2">
    <location>
        <position position="190"/>
    </location>
</feature>
<feature type="glycosylation site" description="N-linked (GlcNAc...) asparagine" evidence="2">
    <location>
        <position position="206"/>
    </location>
</feature>
<feature type="glycosylation site" description="N-linked (GlcNAc...) asparagine" evidence="2">
    <location>
        <position position="245"/>
    </location>
</feature>
<feature type="glycosylation site" description="N-linked (GlcNAc...) asparagine" evidence="2">
    <location>
        <position position="289"/>
    </location>
</feature>
<feature type="disulfide bond" evidence="1">
    <location>
        <begin position="109"/>
        <end position="117"/>
    </location>
</feature>
<feature type="disulfide bond" evidence="1">
    <location>
        <begin position="165"/>
        <end position="176"/>
    </location>
</feature>
<feature type="disulfide bond" evidence="1">
    <location>
        <begin position="276"/>
        <end position="296"/>
    </location>
</feature>
<keyword id="KW-1015">Disulfide bond</keyword>
<keyword id="KW-0325">Glycoprotein</keyword>
<keyword id="KW-0378">Hydrolase</keyword>
<keyword id="KW-0458">Lysosome</keyword>
<keyword id="KW-1185">Reference proteome</keyword>
<keyword id="KW-0732">Signal</keyword>